<evidence type="ECO:0000255" key="1"/>
<evidence type="ECO:0000269" key="2">
    <source>
    </source>
</evidence>
<evidence type="ECO:0000305" key="3"/>
<accession>P47393</accession>
<comment type="subcellular location">
    <subcellularLocation>
        <location evidence="3">Cell membrane</location>
        <topology evidence="3">Multi-pass membrane protein</topology>
    </subcellularLocation>
</comment>
<comment type="disruption phenotype">
    <text evidence="2">Probably essential, it was not disrupted in a global transposon mutagenesis study.</text>
</comment>
<feature type="chain" id="PRO_0000210442" description="Uncharacterized protein MG147">
    <location>
        <begin position="1"/>
        <end position="375"/>
    </location>
</feature>
<feature type="transmembrane region" description="Helical" evidence="1">
    <location>
        <begin position="21"/>
        <end position="41"/>
    </location>
</feature>
<feature type="transmembrane region" description="Helical" evidence="1">
    <location>
        <begin position="66"/>
        <end position="86"/>
    </location>
</feature>
<feature type="transmembrane region" description="Helical" evidence="1">
    <location>
        <begin position="160"/>
        <end position="180"/>
    </location>
</feature>
<feature type="transmembrane region" description="Helical" evidence="1">
    <location>
        <begin position="203"/>
        <end position="223"/>
    </location>
</feature>
<feature type="transmembrane region" description="Helical" evidence="1">
    <location>
        <begin position="234"/>
        <end position="254"/>
    </location>
</feature>
<feature type="transmembrane region" description="Helical" evidence="1">
    <location>
        <begin position="289"/>
        <end position="309"/>
    </location>
</feature>
<feature type="transmembrane region" description="Helical" evidence="1">
    <location>
        <begin position="338"/>
        <end position="358"/>
    </location>
</feature>
<reference key="1">
    <citation type="journal article" date="1995" name="Science">
        <title>The minimal gene complement of Mycoplasma genitalium.</title>
        <authorList>
            <person name="Fraser C.M."/>
            <person name="Gocayne J.D."/>
            <person name="White O."/>
            <person name="Adams M.D."/>
            <person name="Clayton R.A."/>
            <person name="Fleischmann R.D."/>
            <person name="Bult C.J."/>
            <person name="Kerlavage A.R."/>
            <person name="Sutton G.G."/>
            <person name="Kelley J.M."/>
            <person name="Fritchman J.L."/>
            <person name="Weidman J.F."/>
            <person name="Small K.V."/>
            <person name="Sandusky M."/>
            <person name="Fuhrmann J.L."/>
            <person name="Nguyen D.T."/>
            <person name="Utterback T.R."/>
            <person name="Saudek D.M."/>
            <person name="Phillips C.A."/>
            <person name="Merrick J.M."/>
            <person name="Tomb J.-F."/>
            <person name="Dougherty B.A."/>
            <person name="Bott K.F."/>
            <person name="Hu P.-C."/>
            <person name="Lucier T.S."/>
            <person name="Peterson S.N."/>
            <person name="Smith H.O."/>
            <person name="Hutchison C.A. III"/>
            <person name="Venter J.C."/>
        </authorList>
    </citation>
    <scope>NUCLEOTIDE SEQUENCE [LARGE SCALE GENOMIC DNA]</scope>
    <source>
        <strain>ATCC 33530 / DSM 19775 / NCTC 10195 / G37</strain>
    </source>
</reference>
<reference key="2">
    <citation type="journal article" date="2006" name="Proc. Natl. Acad. Sci. U.S.A.">
        <title>Essential genes of a minimal bacterium.</title>
        <authorList>
            <person name="Glass J.I."/>
            <person name="Assad-Garcia N."/>
            <person name="Alperovich N."/>
            <person name="Yooseph S."/>
            <person name="Lewis M.R."/>
            <person name="Maruf M."/>
            <person name="Hutchison C.A. III"/>
            <person name="Smith H.O."/>
            <person name="Venter J.C."/>
        </authorList>
    </citation>
    <scope>SEQUENCE REVISION TO 259</scope>
    <scope>DISRUPTION PHENOTYPE</scope>
    <source>
        <strain>ATCC 33530 / DSM 19775 / NCTC 10195 / G37</strain>
    </source>
</reference>
<organism>
    <name type="scientific">Mycoplasma genitalium (strain ATCC 33530 / DSM 19775 / NCTC 10195 / G37)</name>
    <name type="common">Mycoplasmoides genitalium</name>
    <dbReference type="NCBI Taxonomy" id="243273"/>
    <lineage>
        <taxon>Bacteria</taxon>
        <taxon>Bacillati</taxon>
        <taxon>Mycoplasmatota</taxon>
        <taxon>Mycoplasmoidales</taxon>
        <taxon>Mycoplasmoidaceae</taxon>
        <taxon>Mycoplasmoides</taxon>
    </lineage>
</organism>
<protein>
    <recommendedName>
        <fullName>Uncharacterized protein MG147</fullName>
    </recommendedName>
</protein>
<name>Y147_MYCGE</name>
<keyword id="KW-1003">Cell membrane</keyword>
<keyword id="KW-0472">Membrane</keyword>
<keyword id="KW-1185">Reference proteome</keyword>
<keyword id="KW-0812">Transmembrane</keyword>
<keyword id="KW-1133">Transmembrane helix</keyword>
<dbReference type="EMBL" id="L43967">
    <property type="protein sequence ID" value="AAC71365.2"/>
    <property type="molecule type" value="Genomic_DNA"/>
</dbReference>
<dbReference type="PIR" id="C64216">
    <property type="entry name" value="C64216"/>
</dbReference>
<dbReference type="RefSeq" id="WP_010869354.1">
    <property type="nucleotide sequence ID" value="NC_000908.2"/>
</dbReference>
<dbReference type="STRING" id="243273.MG_147"/>
<dbReference type="GeneID" id="88282279"/>
<dbReference type="KEGG" id="mge:MG_147"/>
<dbReference type="eggNOG" id="ENOG5031YV4">
    <property type="taxonomic scope" value="Bacteria"/>
</dbReference>
<dbReference type="HOGENOM" id="CLU_737345_0_0_14"/>
<dbReference type="InParanoid" id="P47393"/>
<dbReference type="OrthoDB" id="400642at2"/>
<dbReference type="Proteomes" id="UP000000807">
    <property type="component" value="Chromosome"/>
</dbReference>
<dbReference type="GO" id="GO:0005886">
    <property type="term" value="C:plasma membrane"/>
    <property type="evidence" value="ECO:0007669"/>
    <property type="project" value="UniProtKB-SubCell"/>
</dbReference>
<dbReference type="Gene3D" id="1.10.1760.20">
    <property type="match status" value="1"/>
</dbReference>
<dbReference type="InterPro" id="IPR055000">
    <property type="entry name" value="MPN160_family"/>
</dbReference>
<dbReference type="NCBIfam" id="NF045740">
    <property type="entry name" value="MPN160"/>
    <property type="match status" value="1"/>
</dbReference>
<gene>
    <name type="ordered locus">MG147</name>
</gene>
<sequence>MLLLRALFLELKTNKNCKALLLLLIPLLVGLTLIIYGIVLFSTEGVIDHGDHNHLRARFQLTLEEIIVFVVGSIILFFTLASFCVSCFMLMRSPKQKQLEVDHANKTNLKPKAIVNCDLFQLGDYCVFTFKKLSFKQRFKQDFFARSKFSFRSELYRLCLVGVLIALNLALSLIEIPGIVLPWGSSIQFRFFNTAILFIAVRLVGLLSTSLVALITPWLHLLIHPIHTPISSLFYMVNDFLVLWIFYFFFFHLFKAEVIQTTTVVDNKPFSQLVNTKKTKWTKFFSLLVISFLCGFIEGLGFYFGYFLILGNVSSLGLKIYYDGLQQRDLINSSNVLFFLMTTTAIFSIKYIFEMLFFFSVEKNVVNIANHFGLY</sequence>
<proteinExistence type="predicted"/>